<proteinExistence type="inferred from homology"/>
<reference key="1">
    <citation type="journal article" date="2007" name="Nat. Genet.">
        <title>Genomic analysis of Bartonella identifies type IV secretion systems as host adaptability factors.</title>
        <authorList>
            <person name="Saenz H.L."/>
            <person name="Engel P."/>
            <person name="Stoeckli M.C."/>
            <person name="Lanz C."/>
            <person name="Raddatz G."/>
            <person name="Vayssier-Taussat M."/>
            <person name="Birtles R."/>
            <person name="Schuster S.C."/>
            <person name="Dehio C."/>
        </authorList>
    </citation>
    <scope>NUCLEOTIDE SEQUENCE [LARGE SCALE GENOMIC DNA]</scope>
    <source>
        <strain>CIP 105476 / IBS 506</strain>
    </source>
</reference>
<comment type="function">
    <text evidence="1">Catalyzes the attachment of alanine to tRNA(Ala) in a two-step reaction: alanine is first activated by ATP to form Ala-AMP and then transferred to the acceptor end of tRNA(Ala). Also edits incorrectly charged Ser-tRNA(Ala) and Gly-tRNA(Ala) via its editing domain.</text>
</comment>
<comment type="catalytic activity">
    <reaction evidence="1">
        <text>tRNA(Ala) + L-alanine + ATP = L-alanyl-tRNA(Ala) + AMP + diphosphate</text>
        <dbReference type="Rhea" id="RHEA:12540"/>
        <dbReference type="Rhea" id="RHEA-COMP:9657"/>
        <dbReference type="Rhea" id="RHEA-COMP:9923"/>
        <dbReference type="ChEBI" id="CHEBI:30616"/>
        <dbReference type="ChEBI" id="CHEBI:33019"/>
        <dbReference type="ChEBI" id="CHEBI:57972"/>
        <dbReference type="ChEBI" id="CHEBI:78442"/>
        <dbReference type="ChEBI" id="CHEBI:78497"/>
        <dbReference type="ChEBI" id="CHEBI:456215"/>
        <dbReference type="EC" id="6.1.1.7"/>
    </reaction>
</comment>
<comment type="cofactor">
    <cofactor evidence="1">
        <name>Zn(2+)</name>
        <dbReference type="ChEBI" id="CHEBI:29105"/>
    </cofactor>
    <text evidence="1">Binds 1 zinc ion per subunit.</text>
</comment>
<comment type="subcellular location">
    <subcellularLocation>
        <location evidence="1">Cytoplasm</location>
    </subcellularLocation>
</comment>
<comment type="domain">
    <text evidence="1">Consists of three domains; the N-terminal catalytic domain, the editing domain and the C-terminal C-Ala domain. The editing domain removes incorrectly charged amino acids, while the C-Ala domain, along with tRNA(Ala), serves as a bridge to cooperatively bring together the editing and aminoacylation centers thus stimulating deacylation of misacylated tRNAs.</text>
</comment>
<comment type="similarity">
    <text evidence="1">Belongs to the class-II aminoacyl-tRNA synthetase family.</text>
</comment>
<protein>
    <recommendedName>
        <fullName evidence="1">Alanine--tRNA ligase</fullName>
        <ecNumber evidence="1">6.1.1.7</ecNumber>
    </recommendedName>
    <alternativeName>
        <fullName evidence="1">Alanyl-tRNA synthetase</fullName>
        <shortName evidence="1">AlaRS</shortName>
    </alternativeName>
</protein>
<accession>A9IVY8</accession>
<gene>
    <name evidence="1" type="primary">alaS</name>
    <name type="ordered locus">BT_1489</name>
</gene>
<keyword id="KW-0030">Aminoacyl-tRNA synthetase</keyword>
<keyword id="KW-0067">ATP-binding</keyword>
<keyword id="KW-0963">Cytoplasm</keyword>
<keyword id="KW-0436">Ligase</keyword>
<keyword id="KW-0479">Metal-binding</keyword>
<keyword id="KW-0547">Nucleotide-binding</keyword>
<keyword id="KW-0648">Protein biosynthesis</keyword>
<keyword id="KW-0694">RNA-binding</keyword>
<keyword id="KW-0820">tRNA-binding</keyword>
<keyword id="KW-0862">Zinc</keyword>
<sequence>MNSVNNIRSTFLDYFHRNGHQVLSSSPLVPRNDPTLMFTNAGMVQFKNVFTGLEQHLYKKATTAQKCVRAGGKHNDLDNVGYTARHHTFFEMLGNFSFGDYFKEEAIFLSWDLLTKEFCLPKDKLLVTVYQSDDVAAELWRKISGLPDEKIVRIATADNFWAMGDTGPCGPCSEIFYDHGDEIWGGPPGSMEEDGDRFIEIWNLVFMQYEQLSKEERVDLPHPSIDTGMGLERIAAVLQGVHDNYDIDLFRVLIGASEKITGIKATGDFVASHRVIADHLRSSAFLIADGVLPSNEGRGYVLRRIMRRAMRHAHLLGAKEPLMWQLLPALICEMGQAYPELVRAESLISETLKLEEIRFRKTLERGLGLLNEESAKLKEGDHLNGEVAFKLYDTYGFPLDLTQDVLRRRGISVDVDAFDKAMERQKEEARAHWSGSGEAVTETIWFSVRDQVGVTEFLGYETEKAEGIITALVCDGKIVDEVSSGQKAILVLNQTPFYGESGGQIGDSGIISGEDFIFEVHDTQKKADGVFIHLGKVKSGHAKISDCVQLTVDVVRRKKIRANHSATHLLHEALRQVLGSHVTQKGSLVSPERLRFDFSHPKSVSLEELKKIEDLANEIVLQNNKVTTRLMAVDEAISEGAMALFGEKYEDEVRVVSMGAPLEQGGLKKHWSIELCGGTHVERTGDIGLIHIVSESSVSAGVRRIEALTGAAARLYLCRQDVRIREISDLLKTSSSDLEERVRSLLDERRKFEKELNDVRKKMVLNGKITESGQGDITIINGLSFMRHIVKNILPRDLKALVDAGKKQIGSGVVAFITISEDGKGSAVVGVTDDLTDKLNAVDLVRILSNVLGGQGGGGRSDMAQAGGPDGNKANEAFAALKDFLEKT</sequence>
<organism>
    <name type="scientific">Bartonella tribocorum (strain CIP 105476 / IBS 506)</name>
    <dbReference type="NCBI Taxonomy" id="382640"/>
    <lineage>
        <taxon>Bacteria</taxon>
        <taxon>Pseudomonadati</taxon>
        <taxon>Pseudomonadota</taxon>
        <taxon>Alphaproteobacteria</taxon>
        <taxon>Hyphomicrobiales</taxon>
        <taxon>Bartonellaceae</taxon>
        <taxon>Bartonella</taxon>
    </lineage>
</organism>
<evidence type="ECO:0000255" key="1">
    <source>
        <dbReference type="HAMAP-Rule" id="MF_00036"/>
    </source>
</evidence>
<feature type="chain" id="PRO_0000347504" description="Alanine--tRNA ligase">
    <location>
        <begin position="1"/>
        <end position="888"/>
    </location>
</feature>
<feature type="binding site" evidence="1">
    <location>
        <position position="564"/>
    </location>
    <ligand>
        <name>Zn(2+)</name>
        <dbReference type="ChEBI" id="CHEBI:29105"/>
    </ligand>
</feature>
<feature type="binding site" evidence="1">
    <location>
        <position position="568"/>
    </location>
    <ligand>
        <name>Zn(2+)</name>
        <dbReference type="ChEBI" id="CHEBI:29105"/>
    </ligand>
</feature>
<feature type="binding site" evidence="1">
    <location>
        <position position="676"/>
    </location>
    <ligand>
        <name>Zn(2+)</name>
        <dbReference type="ChEBI" id="CHEBI:29105"/>
    </ligand>
</feature>
<feature type="binding site" evidence="1">
    <location>
        <position position="680"/>
    </location>
    <ligand>
        <name>Zn(2+)</name>
        <dbReference type="ChEBI" id="CHEBI:29105"/>
    </ligand>
</feature>
<dbReference type="EC" id="6.1.1.7" evidence="1"/>
<dbReference type="EMBL" id="AM260525">
    <property type="protein sequence ID" value="CAK01835.1"/>
    <property type="molecule type" value="Genomic_DNA"/>
</dbReference>
<dbReference type="RefSeq" id="WP_012231975.1">
    <property type="nucleotide sequence ID" value="NC_010161.1"/>
</dbReference>
<dbReference type="SMR" id="A9IVY8"/>
<dbReference type="KEGG" id="btr:BT_1489"/>
<dbReference type="eggNOG" id="COG0013">
    <property type="taxonomic scope" value="Bacteria"/>
</dbReference>
<dbReference type="HOGENOM" id="CLU_004485_1_1_5"/>
<dbReference type="Proteomes" id="UP000001592">
    <property type="component" value="Chromosome"/>
</dbReference>
<dbReference type="GO" id="GO:0005829">
    <property type="term" value="C:cytosol"/>
    <property type="evidence" value="ECO:0007669"/>
    <property type="project" value="TreeGrafter"/>
</dbReference>
<dbReference type="GO" id="GO:0004813">
    <property type="term" value="F:alanine-tRNA ligase activity"/>
    <property type="evidence" value="ECO:0007669"/>
    <property type="project" value="UniProtKB-UniRule"/>
</dbReference>
<dbReference type="GO" id="GO:0002161">
    <property type="term" value="F:aminoacyl-tRNA deacylase activity"/>
    <property type="evidence" value="ECO:0007669"/>
    <property type="project" value="TreeGrafter"/>
</dbReference>
<dbReference type="GO" id="GO:0005524">
    <property type="term" value="F:ATP binding"/>
    <property type="evidence" value="ECO:0007669"/>
    <property type="project" value="UniProtKB-UniRule"/>
</dbReference>
<dbReference type="GO" id="GO:0000049">
    <property type="term" value="F:tRNA binding"/>
    <property type="evidence" value="ECO:0007669"/>
    <property type="project" value="UniProtKB-KW"/>
</dbReference>
<dbReference type="GO" id="GO:0008270">
    <property type="term" value="F:zinc ion binding"/>
    <property type="evidence" value="ECO:0007669"/>
    <property type="project" value="UniProtKB-UniRule"/>
</dbReference>
<dbReference type="GO" id="GO:0006419">
    <property type="term" value="P:alanyl-tRNA aminoacylation"/>
    <property type="evidence" value="ECO:0007669"/>
    <property type="project" value="UniProtKB-UniRule"/>
</dbReference>
<dbReference type="GO" id="GO:0045892">
    <property type="term" value="P:negative regulation of DNA-templated transcription"/>
    <property type="evidence" value="ECO:0007669"/>
    <property type="project" value="TreeGrafter"/>
</dbReference>
<dbReference type="CDD" id="cd00673">
    <property type="entry name" value="AlaRS_core"/>
    <property type="match status" value="1"/>
</dbReference>
<dbReference type="FunFam" id="2.40.30.130:FF:000001">
    <property type="entry name" value="Alanine--tRNA ligase"/>
    <property type="match status" value="1"/>
</dbReference>
<dbReference type="FunFam" id="3.10.310.40:FF:000001">
    <property type="entry name" value="Alanine--tRNA ligase"/>
    <property type="match status" value="1"/>
</dbReference>
<dbReference type="FunFam" id="3.30.54.20:FF:000001">
    <property type="entry name" value="Alanine--tRNA ligase"/>
    <property type="match status" value="1"/>
</dbReference>
<dbReference type="FunFam" id="3.30.930.10:FF:000004">
    <property type="entry name" value="Alanine--tRNA ligase"/>
    <property type="match status" value="1"/>
</dbReference>
<dbReference type="FunFam" id="3.30.980.10:FF:000004">
    <property type="entry name" value="Alanine--tRNA ligase, cytoplasmic"/>
    <property type="match status" value="1"/>
</dbReference>
<dbReference type="Gene3D" id="2.40.30.130">
    <property type="match status" value="1"/>
</dbReference>
<dbReference type="Gene3D" id="3.10.310.40">
    <property type="match status" value="1"/>
</dbReference>
<dbReference type="Gene3D" id="3.30.54.20">
    <property type="match status" value="1"/>
</dbReference>
<dbReference type="Gene3D" id="6.10.250.550">
    <property type="match status" value="1"/>
</dbReference>
<dbReference type="Gene3D" id="3.30.930.10">
    <property type="entry name" value="Bira Bifunctional Protein, Domain 2"/>
    <property type="match status" value="1"/>
</dbReference>
<dbReference type="Gene3D" id="3.30.980.10">
    <property type="entry name" value="Threonyl-trna Synthetase, Chain A, domain 2"/>
    <property type="match status" value="1"/>
</dbReference>
<dbReference type="HAMAP" id="MF_00036_B">
    <property type="entry name" value="Ala_tRNA_synth_B"/>
    <property type="match status" value="1"/>
</dbReference>
<dbReference type="InterPro" id="IPR045864">
    <property type="entry name" value="aa-tRNA-synth_II/BPL/LPL"/>
</dbReference>
<dbReference type="InterPro" id="IPR002318">
    <property type="entry name" value="Ala-tRNA-lgiase_IIc"/>
</dbReference>
<dbReference type="InterPro" id="IPR018162">
    <property type="entry name" value="Ala-tRNA-ligase_IIc_anticod-bd"/>
</dbReference>
<dbReference type="InterPro" id="IPR018165">
    <property type="entry name" value="Ala-tRNA-synth_IIc_core"/>
</dbReference>
<dbReference type="InterPro" id="IPR018164">
    <property type="entry name" value="Ala-tRNA-synth_IIc_N"/>
</dbReference>
<dbReference type="InterPro" id="IPR050058">
    <property type="entry name" value="Ala-tRNA_ligase"/>
</dbReference>
<dbReference type="InterPro" id="IPR023033">
    <property type="entry name" value="Ala_tRNA_ligase_euk/bac"/>
</dbReference>
<dbReference type="InterPro" id="IPR003156">
    <property type="entry name" value="DHHA1_dom"/>
</dbReference>
<dbReference type="InterPro" id="IPR018163">
    <property type="entry name" value="Thr/Ala-tRNA-synth_IIc_edit"/>
</dbReference>
<dbReference type="InterPro" id="IPR009000">
    <property type="entry name" value="Transl_B-barrel_sf"/>
</dbReference>
<dbReference type="InterPro" id="IPR012947">
    <property type="entry name" value="tRNA_SAD"/>
</dbReference>
<dbReference type="NCBIfam" id="TIGR00344">
    <property type="entry name" value="alaS"/>
    <property type="match status" value="1"/>
</dbReference>
<dbReference type="PANTHER" id="PTHR11777:SF9">
    <property type="entry name" value="ALANINE--TRNA LIGASE, CYTOPLASMIC"/>
    <property type="match status" value="1"/>
</dbReference>
<dbReference type="PANTHER" id="PTHR11777">
    <property type="entry name" value="ALANYL-TRNA SYNTHETASE"/>
    <property type="match status" value="1"/>
</dbReference>
<dbReference type="Pfam" id="PF02272">
    <property type="entry name" value="DHHA1"/>
    <property type="match status" value="1"/>
</dbReference>
<dbReference type="Pfam" id="PF01411">
    <property type="entry name" value="tRNA-synt_2c"/>
    <property type="match status" value="1"/>
</dbReference>
<dbReference type="Pfam" id="PF07973">
    <property type="entry name" value="tRNA_SAD"/>
    <property type="match status" value="1"/>
</dbReference>
<dbReference type="PRINTS" id="PR00980">
    <property type="entry name" value="TRNASYNTHALA"/>
</dbReference>
<dbReference type="SMART" id="SM00863">
    <property type="entry name" value="tRNA_SAD"/>
    <property type="match status" value="1"/>
</dbReference>
<dbReference type="SUPFAM" id="SSF55681">
    <property type="entry name" value="Class II aaRS and biotin synthetases"/>
    <property type="match status" value="1"/>
</dbReference>
<dbReference type="SUPFAM" id="SSF101353">
    <property type="entry name" value="Putative anticodon-binding domain of alanyl-tRNA synthetase (AlaRS)"/>
    <property type="match status" value="1"/>
</dbReference>
<dbReference type="SUPFAM" id="SSF55186">
    <property type="entry name" value="ThrRS/AlaRS common domain"/>
    <property type="match status" value="1"/>
</dbReference>
<dbReference type="SUPFAM" id="SSF50447">
    <property type="entry name" value="Translation proteins"/>
    <property type="match status" value="1"/>
</dbReference>
<dbReference type="PROSITE" id="PS50860">
    <property type="entry name" value="AA_TRNA_LIGASE_II_ALA"/>
    <property type="match status" value="1"/>
</dbReference>
<name>SYA_BART1</name>